<accession>P82438</accession>
<protein>
    <recommendedName>
        <fullName>50 kDa cell wall protein</fullName>
    </recommendedName>
</protein>
<reference evidence="3" key="1">
    <citation type="journal article" date="2001" name="Planta">
        <title>Proteomic analysis reveals a novel set of cell wall proteins in a transformed tobacco cell culture that synthesises secondary walls as determined by biochemical and morphological parameters.</title>
        <authorList>
            <person name="Blee K.A."/>
            <person name="Wheatley E.R."/>
            <person name="Bonham V.A."/>
            <person name="Mitchell G.P."/>
            <person name="Robertson D."/>
            <person name="Slabas A.R."/>
            <person name="Burrell M.M."/>
            <person name="Wojtaszek P."/>
            <person name="Bolwell G.P."/>
        </authorList>
    </citation>
    <scope>PROTEIN SEQUENCE</scope>
    <scope>SUBCELLULAR LOCATION</scope>
    <source>
        <strain evidence="1">cv. Petit Havana</strain>
    </source>
</reference>
<evidence type="ECO:0000269" key="1">
    <source>
    </source>
</evidence>
<evidence type="ECO:0000303" key="2">
    <source>
    </source>
</evidence>
<evidence type="ECO:0000305" key="3"/>
<proteinExistence type="evidence at protein level"/>
<keyword id="KW-0134">Cell wall</keyword>
<keyword id="KW-0903">Direct protein sequencing</keyword>
<keyword id="KW-1185">Reference proteome</keyword>
<keyword id="KW-0964">Secreted</keyword>
<comment type="subcellular location">
    <subcellularLocation>
        <location evidence="1">Secreted</location>
        <location evidence="1">Cell wall</location>
    </subcellularLocation>
</comment>
<name>CWP30_TOBAC</name>
<organism>
    <name type="scientific">Nicotiana tabacum</name>
    <name type="common">Common tobacco</name>
    <dbReference type="NCBI Taxonomy" id="4097"/>
    <lineage>
        <taxon>Eukaryota</taxon>
        <taxon>Viridiplantae</taxon>
        <taxon>Streptophyta</taxon>
        <taxon>Embryophyta</taxon>
        <taxon>Tracheophyta</taxon>
        <taxon>Spermatophyta</taxon>
        <taxon>Magnoliopsida</taxon>
        <taxon>eudicotyledons</taxon>
        <taxon>Gunneridae</taxon>
        <taxon>Pentapetalae</taxon>
        <taxon>asterids</taxon>
        <taxon>lamiids</taxon>
        <taxon>Solanales</taxon>
        <taxon>Solanaceae</taxon>
        <taxon>Nicotianoideae</taxon>
        <taxon>Nicotianeae</taxon>
        <taxon>Nicotiana</taxon>
    </lineage>
</organism>
<feature type="chain" id="PRO_0000079718" description="50 kDa cell wall protein">
    <location>
        <begin position="1"/>
        <end position="10" status="greater than"/>
    </location>
</feature>
<feature type="non-terminal residue" evidence="2">
    <location>
        <position position="10"/>
    </location>
</feature>
<sequence length="10" mass="1127">NPQYPXGNVQ</sequence>
<dbReference type="PaxDb" id="4097-P82438"/>
<dbReference type="Proteomes" id="UP000084051">
    <property type="component" value="Unplaced"/>
</dbReference>
<dbReference type="GO" id="GO:0005576">
    <property type="term" value="C:extracellular region"/>
    <property type="evidence" value="ECO:0007669"/>
    <property type="project" value="UniProtKB-KW"/>
</dbReference>